<keyword id="KW-0963">Cytoplasm</keyword>
<keyword id="KW-0255">Endonuclease</keyword>
<keyword id="KW-0378">Hydrolase</keyword>
<keyword id="KW-0464">Manganese</keyword>
<keyword id="KW-0479">Metal-binding</keyword>
<keyword id="KW-0540">Nuclease</keyword>
<reference key="1">
    <citation type="journal article" date="2006" name="PLoS Genet.">
        <title>The complete genome sequence and comparative genome analysis of the high pathogenicity Yersinia enterocolitica strain 8081.</title>
        <authorList>
            <person name="Thomson N.R."/>
            <person name="Howard S."/>
            <person name="Wren B.W."/>
            <person name="Holden M.T.G."/>
            <person name="Crossman L."/>
            <person name="Challis G.L."/>
            <person name="Churcher C."/>
            <person name="Mungall K."/>
            <person name="Brooks K."/>
            <person name="Chillingworth T."/>
            <person name="Feltwell T."/>
            <person name="Abdellah Z."/>
            <person name="Hauser H."/>
            <person name="Jagels K."/>
            <person name="Maddison M."/>
            <person name="Moule S."/>
            <person name="Sanders M."/>
            <person name="Whitehead S."/>
            <person name="Quail M.A."/>
            <person name="Dougan G."/>
            <person name="Parkhill J."/>
            <person name="Prentice M.B."/>
        </authorList>
    </citation>
    <scope>NUCLEOTIDE SEQUENCE [LARGE SCALE GENOMIC DNA]</scope>
    <source>
        <strain>NCTC 13174 / 8081</strain>
    </source>
</reference>
<accession>A1JP66</accession>
<dbReference type="EC" id="3.1.26.4" evidence="1"/>
<dbReference type="EMBL" id="AM286415">
    <property type="protein sequence ID" value="CAL13300.1"/>
    <property type="molecule type" value="Genomic_DNA"/>
</dbReference>
<dbReference type="RefSeq" id="WP_005173174.1">
    <property type="nucleotide sequence ID" value="NC_008800.1"/>
</dbReference>
<dbReference type="RefSeq" id="YP_001007444.1">
    <property type="nucleotide sequence ID" value="NC_008800.1"/>
</dbReference>
<dbReference type="SMR" id="A1JP66"/>
<dbReference type="KEGG" id="yen:YE3270"/>
<dbReference type="PATRIC" id="fig|393305.7.peg.3478"/>
<dbReference type="eggNOG" id="COG0164">
    <property type="taxonomic scope" value="Bacteria"/>
</dbReference>
<dbReference type="HOGENOM" id="CLU_036532_3_2_6"/>
<dbReference type="OrthoDB" id="9803420at2"/>
<dbReference type="Proteomes" id="UP000000642">
    <property type="component" value="Chromosome"/>
</dbReference>
<dbReference type="GO" id="GO:0005737">
    <property type="term" value="C:cytoplasm"/>
    <property type="evidence" value="ECO:0007669"/>
    <property type="project" value="UniProtKB-SubCell"/>
</dbReference>
<dbReference type="GO" id="GO:0032299">
    <property type="term" value="C:ribonuclease H2 complex"/>
    <property type="evidence" value="ECO:0007669"/>
    <property type="project" value="TreeGrafter"/>
</dbReference>
<dbReference type="GO" id="GO:0030145">
    <property type="term" value="F:manganese ion binding"/>
    <property type="evidence" value="ECO:0007669"/>
    <property type="project" value="UniProtKB-UniRule"/>
</dbReference>
<dbReference type="GO" id="GO:0003723">
    <property type="term" value="F:RNA binding"/>
    <property type="evidence" value="ECO:0007669"/>
    <property type="project" value="InterPro"/>
</dbReference>
<dbReference type="GO" id="GO:0004523">
    <property type="term" value="F:RNA-DNA hybrid ribonuclease activity"/>
    <property type="evidence" value="ECO:0007669"/>
    <property type="project" value="UniProtKB-UniRule"/>
</dbReference>
<dbReference type="GO" id="GO:0043137">
    <property type="term" value="P:DNA replication, removal of RNA primer"/>
    <property type="evidence" value="ECO:0007669"/>
    <property type="project" value="TreeGrafter"/>
</dbReference>
<dbReference type="GO" id="GO:0006298">
    <property type="term" value="P:mismatch repair"/>
    <property type="evidence" value="ECO:0007669"/>
    <property type="project" value="TreeGrafter"/>
</dbReference>
<dbReference type="CDD" id="cd07182">
    <property type="entry name" value="RNase_HII_bacteria_HII_like"/>
    <property type="match status" value="1"/>
</dbReference>
<dbReference type="FunFam" id="3.30.420.10:FF:000006">
    <property type="entry name" value="Ribonuclease HII"/>
    <property type="match status" value="1"/>
</dbReference>
<dbReference type="Gene3D" id="3.30.420.10">
    <property type="entry name" value="Ribonuclease H-like superfamily/Ribonuclease H"/>
    <property type="match status" value="1"/>
</dbReference>
<dbReference type="HAMAP" id="MF_00052_B">
    <property type="entry name" value="RNase_HII_B"/>
    <property type="match status" value="1"/>
</dbReference>
<dbReference type="InterPro" id="IPR022898">
    <property type="entry name" value="RNase_HII"/>
</dbReference>
<dbReference type="InterPro" id="IPR001352">
    <property type="entry name" value="RNase_HII/HIII"/>
</dbReference>
<dbReference type="InterPro" id="IPR024567">
    <property type="entry name" value="RNase_HII/HIII_dom"/>
</dbReference>
<dbReference type="InterPro" id="IPR012337">
    <property type="entry name" value="RNaseH-like_sf"/>
</dbReference>
<dbReference type="InterPro" id="IPR036397">
    <property type="entry name" value="RNaseH_sf"/>
</dbReference>
<dbReference type="NCBIfam" id="NF000594">
    <property type="entry name" value="PRK00015.1-1"/>
    <property type="match status" value="1"/>
</dbReference>
<dbReference type="NCBIfam" id="NF000595">
    <property type="entry name" value="PRK00015.1-3"/>
    <property type="match status" value="1"/>
</dbReference>
<dbReference type="NCBIfam" id="NF000596">
    <property type="entry name" value="PRK00015.1-4"/>
    <property type="match status" value="1"/>
</dbReference>
<dbReference type="PANTHER" id="PTHR10954">
    <property type="entry name" value="RIBONUCLEASE H2 SUBUNIT A"/>
    <property type="match status" value="1"/>
</dbReference>
<dbReference type="PANTHER" id="PTHR10954:SF18">
    <property type="entry name" value="RIBONUCLEASE HII"/>
    <property type="match status" value="1"/>
</dbReference>
<dbReference type="Pfam" id="PF01351">
    <property type="entry name" value="RNase_HII"/>
    <property type="match status" value="1"/>
</dbReference>
<dbReference type="SUPFAM" id="SSF53098">
    <property type="entry name" value="Ribonuclease H-like"/>
    <property type="match status" value="1"/>
</dbReference>
<dbReference type="PROSITE" id="PS51975">
    <property type="entry name" value="RNASE_H_2"/>
    <property type="match status" value="1"/>
</dbReference>
<comment type="function">
    <text evidence="1">Endonuclease that specifically degrades the RNA of RNA-DNA hybrids.</text>
</comment>
<comment type="catalytic activity">
    <reaction evidence="1">
        <text>Endonucleolytic cleavage to 5'-phosphomonoester.</text>
        <dbReference type="EC" id="3.1.26.4"/>
    </reaction>
</comment>
<comment type="cofactor">
    <cofactor evidence="1">
        <name>Mn(2+)</name>
        <dbReference type="ChEBI" id="CHEBI:29035"/>
    </cofactor>
    <cofactor evidence="1">
        <name>Mg(2+)</name>
        <dbReference type="ChEBI" id="CHEBI:18420"/>
    </cofactor>
    <text evidence="1">Manganese or magnesium. Binds 1 divalent metal ion per monomer in the absence of substrate. May bind a second metal ion after substrate binding.</text>
</comment>
<comment type="subcellular location">
    <subcellularLocation>
        <location evidence="1">Cytoplasm</location>
    </subcellularLocation>
</comment>
<comment type="similarity">
    <text evidence="1">Belongs to the RNase HII family.</text>
</comment>
<proteinExistence type="inferred from homology"/>
<sequence>MTDIFIYPQANLIAGVDEVGRGPLVGAVVTAAVILDPKRPIVGLADSKKLSEKRRLSLYDEITDKALSWSLGRAEPEEIDQLNILHATMLAMQRAVAGLHIAPDYVLIDGNRCPKLAMPSLAVVKGDSRVAEISAASILAKVTRDREMTELDLQFPEYGFAQHKGYPTAVHLEKLTTFGATEHHRRSFGPVKRVLGLV</sequence>
<name>RNH2_YERE8</name>
<feature type="chain" id="PRO_1000031221" description="Ribonuclease HII">
    <location>
        <begin position="1"/>
        <end position="198"/>
    </location>
</feature>
<feature type="domain" description="RNase H type-2" evidence="2">
    <location>
        <begin position="11"/>
        <end position="198"/>
    </location>
</feature>
<feature type="binding site" evidence="1">
    <location>
        <position position="17"/>
    </location>
    <ligand>
        <name>a divalent metal cation</name>
        <dbReference type="ChEBI" id="CHEBI:60240"/>
    </ligand>
</feature>
<feature type="binding site" evidence="1">
    <location>
        <position position="18"/>
    </location>
    <ligand>
        <name>a divalent metal cation</name>
        <dbReference type="ChEBI" id="CHEBI:60240"/>
    </ligand>
</feature>
<feature type="binding site" evidence="1">
    <location>
        <position position="109"/>
    </location>
    <ligand>
        <name>a divalent metal cation</name>
        <dbReference type="ChEBI" id="CHEBI:60240"/>
    </ligand>
</feature>
<organism>
    <name type="scientific">Yersinia enterocolitica serotype O:8 / biotype 1B (strain NCTC 13174 / 8081)</name>
    <dbReference type="NCBI Taxonomy" id="393305"/>
    <lineage>
        <taxon>Bacteria</taxon>
        <taxon>Pseudomonadati</taxon>
        <taxon>Pseudomonadota</taxon>
        <taxon>Gammaproteobacteria</taxon>
        <taxon>Enterobacterales</taxon>
        <taxon>Yersiniaceae</taxon>
        <taxon>Yersinia</taxon>
    </lineage>
</organism>
<evidence type="ECO:0000255" key="1">
    <source>
        <dbReference type="HAMAP-Rule" id="MF_00052"/>
    </source>
</evidence>
<evidence type="ECO:0000255" key="2">
    <source>
        <dbReference type="PROSITE-ProRule" id="PRU01319"/>
    </source>
</evidence>
<gene>
    <name evidence="1" type="primary">rnhB</name>
    <name type="ordered locus">YE3270</name>
</gene>
<protein>
    <recommendedName>
        <fullName evidence="1">Ribonuclease HII</fullName>
        <shortName evidence="1">RNase HII</shortName>
        <ecNumber evidence="1">3.1.26.4</ecNumber>
    </recommendedName>
</protein>